<accession>B0R541</accession>
<dbReference type="EC" id="4.2.1.49" evidence="1"/>
<dbReference type="EMBL" id="AM774415">
    <property type="protein sequence ID" value="CAP13856.1"/>
    <property type="molecule type" value="Genomic_DNA"/>
</dbReference>
<dbReference type="RefSeq" id="WP_010902873.1">
    <property type="nucleotide sequence ID" value="NC_010364.1"/>
</dbReference>
<dbReference type="SMR" id="B0R541"/>
<dbReference type="EnsemblBacteria" id="CAP13856">
    <property type="protein sequence ID" value="CAP13856"/>
    <property type="gene ID" value="OE_2734F"/>
</dbReference>
<dbReference type="GeneID" id="68693975"/>
<dbReference type="KEGG" id="hsl:OE_2734F"/>
<dbReference type="HOGENOM" id="CLU_018868_0_1_2"/>
<dbReference type="PhylomeDB" id="B0R541"/>
<dbReference type="UniPathway" id="UPA00379">
    <property type="reaction ID" value="UER00550"/>
</dbReference>
<dbReference type="Proteomes" id="UP000001321">
    <property type="component" value="Chromosome"/>
</dbReference>
<dbReference type="GO" id="GO:0005737">
    <property type="term" value="C:cytoplasm"/>
    <property type="evidence" value="ECO:0007669"/>
    <property type="project" value="UniProtKB-SubCell"/>
</dbReference>
<dbReference type="GO" id="GO:0016153">
    <property type="term" value="F:urocanate hydratase activity"/>
    <property type="evidence" value="ECO:0007669"/>
    <property type="project" value="UniProtKB-UniRule"/>
</dbReference>
<dbReference type="GO" id="GO:0019556">
    <property type="term" value="P:L-histidine catabolic process to glutamate and formamide"/>
    <property type="evidence" value="ECO:0007669"/>
    <property type="project" value="UniProtKB-UniPathway"/>
</dbReference>
<dbReference type="GO" id="GO:0019557">
    <property type="term" value="P:L-histidine catabolic process to glutamate and formate"/>
    <property type="evidence" value="ECO:0007669"/>
    <property type="project" value="UniProtKB-UniPathway"/>
</dbReference>
<dbReference type="FunFam" id="3.40.50.10730:FF:000001">
    <property type="entry name" value="Urocanate hydratase"/>
    <property type="match status" value="1"/>
</dbReference>
<dbReference type="Gene3D" id="3.40.50.10730">
    <property type="entry name" value="Urocanase like domains"/>
    <property type="match status" value="1"/>
</dbReference>
<dbReference type="Gene3D" id="3.40.1770.10">
    <property type="entry name" value="Urocanase superfamily"/>
    <property type="match status" value="1"/>
</dbReference>
<dbReference type="HAMAP" id="MF_00577">
    <property type="entry name" value="HutU"/>
    <property type="match status" value="1"/>
</dbReference>
<dbReference type="InterPro" id="IPR055351">
    <property type="entry name" value="Urocanase"/>
</dbReference>
<dbReference type="InterPro" id="IPR023637">
    <property type="entry name" value="Urocanase-like"/>
</dbReference>
<dbReference type="InterPro" id="IPR035401">
    <property type="entry name" value="Urocanase_C"/>
</dbReference>
<dbReference type="InterPro" id="IPR038364">
    <property type="entry name" value="Urocanase_central_sf"/>
</dbReference>
<dbReference type="InterPro" id="IPR023636">
    <property type="entry name" value="Urocanase_CS"/>
</dbReference>
<dbReference type="InterPro" id="IPR035400">
    <property type="entry name" value="Urocanase_N"/>
</dbReference>
<dbReference type="InterPro" id="IPR035085">
    <property type="entry name" value="Urocanase_Rossmann-like"/>
</dbReference>
<dbReference type="InterPro" id="IPR036190">
    <property type="entry name" value="Urocanase_sf"/>
</dbReference>
<dbReference type="NCBIfam" id="TIGR01228">
    <property type="entry name" value="hutU"/>
    <property type="match status" value="1"/>
</dbReference>
<dbReference type="NCBIfam" id="NF003820">
    <property type="entry name" value="PRK05414.1"/>
    <property type="match status" value="1"/>
</dbReference>
<dbReference type="PANTHER" id="PTHR12216">
    <property type="entry name" value="UROCANATE HYDRATASE"/>
    <property type="match status" value="1"/>
</dbReference>
<dbReference type="PANTHER" id="PTHR12216:SF4">
    <property type="entry name" value="UROCANATE HYDRATASE"/>
    <property type="match status" value="1"/>
</dbReference>
<dbReference type="Pfam" id="PF01175">
    <property type="entry name" value="Urocanase"/>
    <property type="match status" value="1"/>
</dbReference>
<dbReference type="Pfam" id="PF17392">
    <property type="entry name" value="Urocanase_C"/>
    <property type="match status" value="1"/>
</dbReference>
<dbReference type="Pfam" id="PF17391">
    <property type="entry name" value="Urocanase_N"/>
    <property type="match status" value="1"/>
</dbReference>
<dbReference type="PIRSF" id="PIRSF001423">
    <property type="entry name" value="Urocanate_hydrat"/>
    <property type="match status" value="1"/>
</dbReference>
<dbReference type="SUPFAM" id="SSF111326">
    <property type="entry name" value="Urocanase"/>
    <property type="match status" value="1"/>
</dbReference>
<dbReference type="PROSITE" id="PS01233">
    <property type="entry name" value="UROCANASE"/>
    <property type="match status" value="1"/>
</dbReference>
<gene>
    <name evidence="1" type="primary">hutU</name>
    <name type="ordered locus">OE_2734F</name>
</gene>
<reference key="1">
    <citation type="journal article" date="2008" name="Genomics">
        <title>Evolution in the laboratory: the genome of Halobacterium salinarum strain R1 compared to that of strain NRC-1.</title>
        <authorList>
            <person name="Pfeiffer F."/>
            <person name="Schuster S.C."/>
            <person name="Broicher A."/>
            <person name="Falb M."/>
            <person name="Palm P."/>
            <person name="Rodewald K."/>
            <person name="Ruepp A."/>
            <person name="Soppa J."/>
            <person name="Tittor J."/>
            <person name="Oesterhelt D."/>
        </authorList>
    </citation>
    <scope>NUCLEOTIDE SEQUENCE [LARGE SCALE GENOMIC DNA]</scope>
    <source>
        <strain>ATCC 29341 / DSM 671 / R1</strain>
    </source>
</reference>
<keyword id="KW-0963">Cytoplasm</keyword>
<keyword id="KW-0369">Histidine metabolism</keyword>
<keyword id="KW-0456">Lyase</keyword>
<keyword id="KW-0520">NAD</keyword>
<feature type="chain" id="PRO_1000129563" description="Probable urocanate hydratase">
    <location>
        <begin position="1"/>
        <end position="588"/>
    </location>
</feature>
<feature type="region of interest" description="Disordered" evidence="2">
    <location>
        <begin position="1"/>
        <end position="22"/>
    </location>
</feature>
<feature type="compositionally biased region" description="Low complexity" evidence="2">
    <location>
        <begin position="1"/>
        <end position="15"/>
    </location>
</feature>
<feature type="active site" evidence="1">
    <location>
        <position position="431"/>
    </location>
</feature>
<feature type="binding site" evidence="1">
    <location>
        <begin position="62"/>
        <end position="63"/>
    </location>
    <ligand>
        <name>NAD(+)</name>
        <dbReference type="ChEBI" id="CHEBI:57540"/>
    </ligand>
</feature>
<feature type="binding site" evidence="1">
    <location>
        <position position="140"/>
    </location>
    <ligand>
        <name>NAD(+)</name>
        <dbReference type="ChEBI" id="CHEBI:57540"/>
    </ligand>
</feature>
<feature type="binding site" evidence="1">
    <location>
        <begin position="188"/>
        <end position="190"/>
    </location>
    <ligand>
        <name>NAD(+)</name>
        <dbReference type="ChEBI" id="CHEBI:57540"/>
    </ligand>
</feature>
<feature type="binding site" evidence="1">
    <location>
        <position position="208"/>
    </location>
    <ligand>
        <name>NAD(+)</name>
        <dbReference type="ChEBI" id="CHEBI:57540"/>
    </ligand>
</feature>
<feature type="binding site" evidence="1">
    <location>
        <position position="213"/>
    </location>
    <ligand>
        <name>NAD(+)</name>
        <dbReference type="ChEBI" id="CHEBI:57540"/>
    </ligand>
</feature>
<feature type="binding site" evidence="1">
    <location>
        <begin position="254"/>
        <end position="255"/>
    </location>
    <ligand>
        <name>NAD(+)</name>
        <dbReference type="ChEBI" id="CHEBI:57540"/>
    </ligand>
</feature>
<feature type="binding site" evidence="1">
    <location>
        <begin position="275"/>
        <end position="279"/>
    </location>
    <ligand>
        <name>NAD(+)</name>
        <dbReference type="ChEBI" id="CHEBI:57540"/>
    </ligand>
</feature>
<feature type="binding site" evidence="1">
    <location>
        <position position="334"/>
    </location>
    <ligand>
        <name>NAD(+)</name>
        <dbReference type="ChEBI" id="CHEBI:57540"/>
    </ligand>
</feature>
<feature type="binding site" evidence="1">
    <location>
        <position position="520"/>
    </location>
    <ligand>
        <name>NAD(+)</name>
        <dbReference type="ChEBI" id="CHEBI:57540"/>
    </ligand>
</feature>
<sequence length="588" mass="63223">MDTPSAAAETSEPSAQWQAYRGAPTGTDIECEGWRQEAALRMLNNNLDPEVAEDPENLVVYGGTGQAARSWDAYDAILDELRTLADAETLLVQSGKPVGVFETHERAPSVLIANSNLVGNWADWEQFHELEAEGKIMYGQMTAGSWAYIGTQGIIQGTFETLAELARDHYPDNDGLRGKIVATAGLGGMGGAQPLAVTMNHGVCIAAEVDEARIDRRIETGYCMERTDDLGEAIERATAAAEAGDPYSVGVHGNAADVLEGMLDRDFVPDVVTDQTSAHDELAGYYPSGYTVADADELRDEDPDAYREASMDTMARHVAAVLAMQDAGAVAFEYGNNIRGQVAAHRGDVTTTAGESHDPFDFPGFVPAYIRPLFCRGKGPFRWVALSGNPADIHRTDRAVTELFPEKDDLHRWIDLAQEHVQFQGLPSRVCWLGYCAADDDLTERARFAVRINELVDNGEIEAPIVVTRDHLDAGSVASPNRETEAMRDGTDAVADWPILNALLNTAAGADIVSVHNGGGVGIGNSLHTNNHVVLDGSDAAAETARRVFTTDPGMGVIRHADAGYADALVEADASGVTVPMRDAEREQ</sequence>
<protein>
    <recommendedName>
        <fullName evidence="1">Probable urocanate hydratase</fullName>
        <shortName evidence="1">Urocanase</shortName>
        <ecNumber evidence="1">4.2.1.49</ecNumber>
    </recommendedName>
    <alternativeName>
        <fullName evidence="1">Imidazolonepropionate hydrolase</fullName>
    </alternativeName>
</protein>
<proteinExistence type="inferred from homology"/>
<organism>
    <name type="scientific">Halobacterium salinarum (strain ATCC 29341 / DSM 671 / R1)</name>
    <dbReference type="NCBI Taxonomy" id="478009"/>
    <lineage>
        <taxon>Archaea</taxon>
        <taxon>Methanobacteriati</taxon>
        <taxon>Methanobacteriota</taxon>
        <taxon>Stenosarchaea group</taxon>
        <taxon>Halobacteria</taxon>
        <taxon>Halobacteriales</taxon>
        <taxon>Halobacteriaceae</taxon>
        <taxon>Halobacterium</taxon>
        <taxon>Halobacterium salinarum NRC-34001</taxon>
    </lineage>
</organism>
<name>HUTU_HALS3</name>
<comment type="function">
    <text evidence="1">Catalyzes the conversion of urocanate to 4-imidazolone-5-propionate.</text>
</comment>
<comment type="catalytic activity">
    <reaction evidence="1">
        <text>4-imidazolone-5-propanoate = trans-urocanate + H2O</text>
        <dbReference type="Rhea" id="RHEA:13101"/>
        <dbReference type="ChEBI" id="CHEBI:15377"/>
        <dbReference type="ChEBI" id="CHEBI:17771"/>
        <dbReference type="ChEBI" id="CHEBI:77893"/>
        <dbReference type="EC" id="4.2.1.49"/>
    </reaction>
</comment>
<comment type="cofactor">
    <cofactor evidence="1">
        <name>NAD(+)</name>
        <dbReference type="ChEBI" id="CHEBI:57540"/>
    </cofactor>
    <text evidence="1">Binds 1 NAD(+) per subunit.</text>
</comment>
<comment type="pathway">
    <text evidence="1">Amino-acid degradation; L-histidine degradation into L-glutamate; N-formimidoyl-L-glutamate from L-histidine: step 2/3.</text>
</comment>
<comment type="subcellular location">
    <subcellularLocation>
        <location evidence="1">Cytoplasm</location>
    </subcellularLocation>
</comment>
<comment type="similarity">
    <text evidence="1">Belongs to the urocanase family.</text>
</comment>
<evidence type="ECO:0000255" key="1">
    <source>
        <dbReference type="HAMAP-Rule" id="MF_00577"/>
    </source>
</evidence>
<evidence type="ECO:0000256" key="2">
    <source>
        <dbReference type="SAM" id="MobiDB-lite"/>
    </source>
</evidence>